<keyword id="KW-1003">Cell membrane</keyword>
<keyword id="KW-0418">Kinase</keyword>
<keyword id="KW-0472">Membrane</keyword>
<keyword id="KW-0597">Phosphoprotein</keyword>
<keyword id="KW-0598">Phosphotransferase system</keyword>
<keyword id="KW-0762">Sugar transport</keyword>
<keyword id="KW-0808">Transferase</keyword>
<keyword id="KW-0812">Transmembrane</keyword>
<keyword id="KW-1133">Transmembrane helix</keyword>
<keyword id="KW-0813">Transport</keyword>
<comment type="function">
    <text evidence="1">The phosphoenolpyruvate-dependent sugar phosphotransferase system (sugar PTS), a major carbohydrate active transport system, catalyzes the phosphorylation of incoming sugar substrates concomitantly with their translocation across the cell membrane. The enzyme II LacEF PTS system is involved in lactose transport.</text>
</comment>
<comment type="catalytic activity">
    <reaction evidence="1">
        <text>lactose(out) + N(pros)-phospho-L-histidyl-[protein] = lactose 6-phosphate(in) + L-histidyl-[protein]</text>
        <dbReference type="Rhea" id="RHEA:42400"/>
        <dbReference type="Rhea" id="RHEA-COMP:9745"/>
        <dbReference type="Rhea" id="RHEA-COMP:9746"/>
        <dbReference type="ChEBI" id="CHEBI:17716"/>
        <dbReference type="ChEBI" id="CHEBI:29979"/>
        <dbReference type="ChEBI" id="CHEBI:64837"/>
        <dbReference type="ChEBI" id="CHEBI:79080"/>
        <dbReference type="EC" id="2.7.1.207"/>
    </reaction>
</comment>
<comment type="subcellular location">
    <subcellularLocation>
        <location evidence="1 3">Cell membrane</location>
        <topology evidence="1 3">Multi-pass membrane protein</topology>
    </subcellularLocation>
</comment>
<comment type="induction">
    <text evidence="1">Induced by lactose, galactose and galactose-6-P. Repressed by glucose.</text>
</comment>
<comment type="domain">
    <text evidence="3">The EIIC type-3 domain forms the PTS system translocation channel and contains the specific substrate-binding site.</text>
</comment>
<comment type="domain">
    <text evidence="2">The PTS EIIB type-3 domain is phosphorylated by phospho-EIIA on a cysteinyl residue. Then, it transfers the phosphoryl group to the sugar substrate concomitantly with the sugar uptake processed by the PTS EIIC type-3 domain.</text>
</comment>
<name>PTLCB_STAAS</name>
<dbReference type="EC" id="2.7.1.207" evidence="1"/>
<dbReference type="EMBL" id="BX571857">
    <property type="protein sequence ID" value="CAG43899.1"/>
    <property type="molecule type" value="Genomic_DNA"/>
</dbReference>
<dbReference type="RefSeq" id="WP_000983330.1">
    <property type="nucleotide sequence ID" value="NC_002953.3"/>
</dbReference>
<dbReference type="SMR" id="Q6G7C4"/>
<dbReference type="KEGG" id="sas:SAS2091"/>
<dbReference type="HOGENOM" id="CLU_029688_0_0_9"/>
<dbReference type="GO" id="GO:0005886">
    <property type="term" value="C:plasma membrane"/>
    <property type="evidence" value="ECO:0007669"/>
    <property type="project" value="UniProtKB-SubCell"/>
</dbReference>
<dbReference type="GO" id="GO:0016301">
    <property type="term" value="F:kinase activity"/>
    <property type="evidence" value="ECO:0007669"/>
    <property type="project" value="UniProtKB-KW"/>
</dbReference>
<dbReference type="GO" id="GO:0022869">
    <property type="term" value="F:protein-N(PI)-phosphohistidine-lactose phosphotransferase system transporter activity"/>
    <property type="evidence" value="ECO:0007669"/>
    <property type="project" value="InterPro"/>
</dbReference>
<dbReference type="GO" id="GO:1901264">
    <property type="term" value="P:carbohydrate derivative transport"/>
    <property type="evidence" value="ECO:0007669"/>
    <property type="project" value="TreeGrafter"/>
</dbReference>
<dbReference type="GO" id="GO:0009401">
    <property type="term" value="P:phosphoenolpyruvate-dependent sugar phosphotransferase system"/>
    <property type="evidence" value="ECO:0007669"/>
    <property type="project" value="UniProtKB-KW"/>
</dbReference>
<dbReference type="CDD" id="cd05565">
    <property type="entry name" value="PTS_IIB_lactose"/>
    <property type="match status" value="1"/>
</dbReference>
<dbReference type="Gene3D" id="3.40.50.2300">
    <property type="match status" value="1"/>
</dbReference>
<dbReference type="InterPro" id="IPR004801">
    <property type="entry name" value="LacE"/>
</dbReference>
<dbReference type="InterPro" id="IPR036095">
    <property type="entry name" value="PTS_EIIB-like_sf"/>
</dbReference>
<dbReference type="InterPro" id="IPR003501">
    <property type="entry name" value="PTS_EIIB_2/3"/>
</dbReference>
<dbReference type="InterPro" id="IPR013012">
    <property type="entry name" value="PTS_EIIB_3"/>
</dbReference>
<dbReference type="InterPro" id="IPR003352">
    <property type="entry name" value="PTS_EIIC"/>
</dbReference>
<dbReference type="InterPro" id="IPR004501">
    <property type="entry name" value="PTS_EIIC_3"/>
</dbReference>
<dbReference type="InterPro" id="IPR041713">
    <property type="entry name" value="PTS_IIB"/>
</dbReference>
<dbReference type="InterPro" id="IPR051088">
    <property type="entry name" value="PTS_Sugar-EIIC/EIIB"/>
</dbReference>
<dbReference type="NCBIfam" id="TIGR00394">
    <property type="entry name" value="lac_pts_IIC"/>
    <property type="match status" value="1"/>
</dbReference>
<dbReference type="NCBIfam" id="TIGR00410">
    <property type="entry name" value="lacE"/>
    <property type="match status" value="1"/>
</dbReference>
<dbReference type="NCBIfam" id="TIGR00853">
    <property type="entry name" value="pts-lac"/>
    <property type="match status" value="1"/>
</dbReference>
<dbReference type="PANTHER" id="PTHR33989">
    <property type="match status" value="1"/>
</dbReference>
<dbReference type="PANTHER" id="PTHR33989:SF8">
    <property type="entry name" value="PERMEASE IIC COMPONENT"/>
    <property type="match status" value="1"/>
</dbReference>
<dbReference type="Pfam" id="PF02378">
    <property type="entry name" value="PTS_EIIC"/>
    <property type="match status" value="1"/>
</dbReference>
<dbReference type="Pfam" id="PF02302">
    <property type="entry name" value="PTS_IIB"/>
    <property type="match status" value="1"/>
</dbReference>
<dbReference type="SUPFAM" id="SSF52794">
    <property type="entry name" value="PTS system IIB component-like"/>
    <property type="match status" value="1"/>
</dbReference>
<dbReference type="PROSITE" id="PS51100">
    <property type="entry name" value="PTS_EIIB_TYPE_3"/>
    <property type="match status" value="1"/>
</dbReference>
<dbReference type="PROSITE" id="PS51105">
    <property type="entry name" value="PTS_EIIC_TYPE_3"/>
    <property type="match status" value="1"/>
</dbReference>
<evidence type="ECO:0000250" key="1">
    <source>
        <dbReference type="UniProtKB" id="P11162"/>
    </source>
</evidence>
<evidence type="ECO:0000255" key="2">
    <source>
        <dbReference type="PROSITE-ProRule" id="PRU00423"/>
    </source>
</evidence>
<evidence type="ECO:0000255" key="3">
    <source>
        <dbReference type="PROSITE-ProRule" id="PRU00428"/>
    </source>
</evidence>
<organism>
    <name type="scientific">Staphylococcus aureus (strain MSSA476)</name>
    <dbReference type="NCBI Taxonomy" id="282459"/>
    <lineage>
        <taxon>Bacteria</taxon>
        <taxon>Bacillati</taxon>
        <taxon>Bacillota</taxon>
        <taxon>Bacilli</taxon>
        <taxon>Bacillales</taxon>
        <taxon>Staphylococcaceae</taxon>
        <taxon>Staphylococcus</taxon>
    </lineage>
</organism>
<sequence>MMQKLIAQIEKGKPFFEKLSRNIYLRAIRDGFISAMPVILFSSIFLLIAYVPNIFGFKWDKGMEAILMKPYNYTMGLVAFLVAGTTAKSLTDSFNRKLESTNQINFISTMLAAMCGFLFLASDPAKDGGFLSAFMGTKGLLTAFLSAFVTVIVYNFCVKRNITIKMPKEVPPNISQVFKDLIPFSAVIIILYALDLVIRNSFKSNVAEGILKLFEPLFTAADGWIGVTIIFGAFALFWFVGIHGPSIVEPAIAAITYANIEANFKLLQAGEHADKIITSGTQMFIVTFGGTGATLVVPFMFMWMTKSKRNKAIGRASVVPTFFGVNEPILFGAPLVLNPVFFIPFVLAPIVNVWIFKLFVEVLGMNSFSVNLPWTTPGPLGIIMGTGFGLWSFVLAITLIVVDIIIYYPFLKVYDSEILDEEEGRKESNSDLKEKVAANFDTKKADSILAASGVSDDAAKASNITEQTNVLVLCAGGGTSGLLANALNKAAEEYHVPVKAAAGGYGAHMDIMKEYQLIILAPQVASNYEDIKQDTDRLGIKLAKTQGAEYIKLTRDGQAALDFVQQQFEN</sequence>
<reference key="1">
    <citation type="journal article" date="2004" name="Proc. Natl. Acad. Sci. U.S.A.">
        <title>Complete genomes of two clinical Staphylococcus aureus strains: evidence for the rapid evolution of virulence and drug resistance.</title>
        <authorList>
            <person name="Holden M.T.G."/>
            <person name="Feil E.J."/>
            <person name="Lindsay J.A."/>
            <person name="Peacock S.J."/>
            <person name="Day N.P.J."/>
            <person name="Enright M.C."/>
            <person name="Foster T.J."/>
            <person name="Moore C.E."/>
            <person name="Hurst L."/>
            <person name="Atkin R."/>
            <person name="Barron A."/>
            <person name="Bason N."/>
            <person name="Bentley S.D."/>
            <person name="Chillingworth C."/>
            <person name="Chillingworth T."/>
            <person name="Churcher C."/>
            <person name="Clark L."/>
            <person name="Corton C."/>
            <person name="Cronin A."/>
            <person name="Doggett J."/>
            <person name="Dowd L."/>
            <person name="Feltwell T."/>
            <person name="Hance Z."/>
            <person name="Harris B."/>
            <person name="Hauser H."/>
            <person name="Holroyd S."/>
            <person name="Jagels K."/>
            <person name="James K.D."/>
            <person name="Lennard N."/>
            <person name="Line A."/>
            <person name="Mayes R."/>
            <person name="Moule S."/>
            <person name="Mungall K."/>
            <person name="Ormond D."/>
            <person name="Quail M.A."/>
            <person name="Rabbinowitsch E."/>
            <person name="Rutherford K.M."/>
            <person name="Sanders M."/>
            <person name="Sharp S."/>
            <person name="Simmonds M."/>
            <person name="Stevens K."/>
            <person name="Whitehead S."/>
            <person name="Barrell B.G."/>
            <person name="Spratt B.G."/>
            <person name="Parkhill J."/>
        </authorList>
    </citation>
    <scope>NUCLEOTIDE SEQUENCE [LARGE SCALE GENOMIC DNA]</scope>
    <source>
        <strain>MSSA476</strain>
    </source>
</reference>
<protein>
    <recommendedName>
        <fullName evidence="1">PTS system lactose-specific EIICB component</fullName>
    </recommendedName>
    <alternativeName>
        <fullName evidence="1">EIICB-Lac</fullName>
        <shortName evidence="1">EII-Lac</shortName>
    </alternativeName>
    <domain>
        <recommendedName>
            <fullName evidence="1">PTS system lactose-specific EIIC component</fullName>
        </recommendedName>
        <alternativeName>
            <fullName evidence="1">Lactose permease IIC component</fullName>
        </alternativeName>
    </domain>
    <domain>
        <recommendedName>
            <fullName evidence="1">PTS system lactose-specific EIIB component</fullName>
            <ecNumber evidence="1">2.7.1.207</ecNumber>
        </recommendedName>
        <alternativeName>
            <fullName evidence="1">Lactose-specific phosphotransferase enzyme IIB component</fullName>
        </alternativeName>
    </domain>
</protein>
<gene>
    <name evidence="1" type="primary">lacE</name>
    <name type="ordered locus">SAS2091</name>
</gene>
<proteinExistence type="inferred from homology"/>
<accession>Q6G7C4</accession>
<feature type="chain" id="PRO_0000186589" description="PTS system lactose-specific EIICB component">
    <location>
        <begin position="1"/>
        <end position="570"/>
    </location>
</feature>
<feature type="transmembrane region" description="Helical" evidence="3">
    <location>
        <begin position="31"/>
        <end position="51"/>
    </location>
</feature>
<feature type="transmembrane region" description="Helical" evidence="3">
    <location>
        <begin position="65"/>
        <end position="85"/>
    </location>
</feature>
<feature type="transmembrane region" description="Helical" evidence="3">
    <location>
        <begin position="104"/>
        <end position="124"/>
    </location>
</feature>
<feature type="transmembrane region" description="Helical" evidence="3">
    <location>
        <begin position="133"/>
        <end position="153"/>
    </location>
</feature>
<feature type="transmembrane region" description="Helical" evidence="3">
    <location>
        <begin position="178"/>
        <end position="198"/>
    </location>
</feature>
<feature type="transmembrane region" description="Helical" evidence="3">
    <location>
        <begin position="223"/>
        <end position="243"/>
    </location>
</feature>
<feature type="transmembrane region" description="Helical" evidence="3">
    <location>
        <begin position="283"/>
        <end position="303"/>
    </location>
</feature>
<feature type="transmembrane region" description="Helical" evidence="3">
    <location>
        <begin position="340"/>
        <end position="360"/>
    </location>
</feature>
<feature type="transmembrane region" description="Helical" evidence="3">
    <location>
        <begin position="382"/>
        <end position="402"/>
    </location>
</feature>
<feature type="domain" description="PTS EIIC type-3" evidence="3">
    <location>
        <begin position="9"/>
        <end position="410"/>
    </location>
</feature>
<feature type="domain" description="PTS EIIB type-3" evidence="2">
    <location>
        <begin position="467"/>
        <end position="570"/>
    </location>
</feature>
<feature type="active site" description="Phosphocysteine intermediate; for EIIB activity" evidence="1">
    <location>
        <position position="474"/>
    </location>
</feature>
<feature type="modified residue" description="Phosphocysteine; by EIIA" evidence="1 2">
    <location>
        <position position="474"/>
    </location>
</feature>